<protein>
    <recommendedName>
        <fullName>Transcriptional anti-antiactivator ExsC</fullName>
    </recommendedName>
</protein>
<gene>
    <name type="primary">exsC</name>
    <name type="ordered locus">PA1710</name>
</gene>
<comment type="function">
    <text evidence="1 2 3 6">Part of the regulatory cascade that plays a role in the transcriptional regulation of the type III secretion system (T3SS) (PubMed:16714561, PubMed:9045825). Interacts with antiactivator ExsD to inhibit its activity leading to ExsA-mediated transcription (PubMed:15225323, PubMed:16980486).</text>
</comment>
<comment type="activity regulation">
    <text evidence="4">In the absence of inducing signals, ExsE interacts with and inhibits ExsC activity.</text>
</comment>
<comment type="subunit">
    <text evidence="1 3 4 5">Homodimer (PubMed:17197437). Interacts with ExsE (PubMed:17197437, PubMed:20536183). Interacts directly with ExsD to form a heterotetrameric complex (PubMed:15225323, PubMed:16980486, PubMed:17197437).</text>
</comment>
<comment type="subcellular location">
    <subcellularLocation>
        <location evidence="1">Cytoplasm</location>
    </subcellularLocation>
</comment>
<comment type="disruption phenotype">
    <text evidence="1 2 6">Deletion mutant results in a two to three-fold reduction in extracellular exoenzyme S activity representing the efficiency of type III secretion system (T3SS) (PubMed:15225323, PubMed:9045825). Mutant also demonstrates a lag in the induction of cytotoxicity towards Chinese hamster ovary cells and is attenuated for virulence in a mouse pneumonia model (PubMed:16714561).</text>
</comment>
<name>EXSC_PSEAE</name>
<keyword id="KW-0002">3D-structure</keyword>
<keyword id="KW-0963">Cytoplasm</keyword>
<keyword id="KW-1185">Reference proteome</keyword>
<dbReference type="EMBL" id="M64975">
    <property type="protein sequence ID" value="AAA25814.1"/>
    <property type="molecule type" value="Genomic_DNA"/>
</dbReference>
<dbReference type="EMBL" id="AE004091">
    <property type="protein sequence ID" value="AAG05099.1"/>
    <property type="molecule type" value="Genomic_DNA"/>
</dbReference>
<dbReference type="PIR" id="A41047">
    <property type="entry name" value="A41047"/>
</dbReference>
<dbReference type="RefSeq" id="NP_250401.1">
    <property type="nucleotide sequence ID" value="NC_002516.2"/>
</dbReference>
<dbReference type="RefSeq" id="WP_003100769.1">
    <property type="nucleotide sequence ID" value="NZ_QZGE01000003.1"/>
</dbReference>
<dbReference type="PDB" id="3KXY">
    <property type="method" value="X-ray"/>
    <property type="resolution" value="2.80 A"/>
    <property type="chains" value="A/B/C/D/E/F/G/H/I/J/K/L=1-131"/>
</dbReference>
<dbReference type="PDBsum" id="3KXY"/>
<dbReference type="SMR" id="P26995"/>
<dbReference type="IntAct" id="P26995">
    <property type="interactions" value="1"/>
</dbReference>
<dbReference type="STRING" id="208964.PA1710"/>
<dbReference type="PaxDb" id="208964-PA1710"/>
<dbReference type="DNASU" id="878452"/>
<dbReference type="GeneID" id="878452"/>
<dbReference type="KEGG" id="pae:PA1710"/>
<dbReference type="PATRIC" id="fig|208964.12.peg.1772"/>
<dbReference type="PseudoCAP" id="PA1710"/>
<dbReference type="HOGENOM" id="CLU_1785211_0_0_6"/>
<dbReference type="InParanoid" id="P26995"/>
<dbReference type="OrthoDB" id="6194747at2"/>
<dbReference type="BioCyc" id="PAER208964:G1FZ6-1741-MONOMER"/>
<dbReference type="EvolutionaryTrace" id="P26995"/>
<dbReference type="Proteomes" id="UP000002438">
    <property type="component" value="Chromosome"/>
</dbReference>
<dbReference type="GO" id="GO:0005737">
    <property type="term" value="C:cytoplasm"/>
    <property type="evidence" value="ECO:0007669"/>
    <property type="project" value="UniProtKB-SubCell"/>
</dbReference>
<dbReference type="GO" id="GO:0045893">
    <property type="term" value="P:positive regulation of DNA-templated transcription"/>
    <property type="evidence" value="ECO:0000315"/>
    <property type="project" value="PseudoCAP"/>
</dbReference>
<dbReference type="GO" id="GO:0030254">
    <property type="term" value="P:protein secretion by the type III secretion system"/>
    <property type="evidence" value="ECO:0000315"/>
    <property type="project" value="PseudoCAP"/>
</dbReference>
<dbReference type="CDD" id="cd17018">
    <property type="entry name" value="T3SC_IA_ExsC-like"/>
    <property type="match status" value="1"/>
</dbReference>
<dbReference type="Gene3D" id="3.30.1460.10">
    <property type="match status" value="1"/>
</dbReference>
<dbReference type="InterPro" id="IPR010261">
    <property type="entry name" value="Tir_chaperone"/>
</dbReference>
<dbReference type="Pfam" id="PF05932">
    <property type="entry name" value="CesT"/>
    <property type="match status" value="1"/>
</dbReference>
<dbReference type="SUPFAM" id="SSF69635">
    <property type="entry name" value="Type III secretory system chaperone-like"/>
    <property type="match status" value="1"/>
</dbReference>
<accession>P26995</accession>
<reference key="1">
    <citation type="journal article" date="1991" name="J. Bacteriol.">
        <title>Cloning and sequence analysis of a trans-regulatory locus required for exoenzyme S synthesis in Pseudomonas aeruginosa.</title>
        <authorList>
            <person name="Frank D.W."/>
            <person name="Iglewski B.H."/>
        </authorList>
    </citation>
    <scope>NUCLEOTIDE SEQUENCE [GENOMIC DNA]</scope>
    <source>
        <strain>ATCC 15692 / DSM 22644 / CIP 104116 / JCM 14847 / LMG 12228 / 1C / PRS 101 / PAO1</strain>
    </source>
</reference>
<reference key="2">
    <citation type="journal article" date="2000" name="Nature">
        <title>Complete genome sequence of Pseudomonas aeruginosa PAO1, an opportunistic pathogen.</title>
        <authorList>
            <person name="Stover C.K."/>
            <person name="Pham X.-Q.T."/>
            <person name="Erwin A.L."/>
            <person name="Mizoguchi S.D."/>
            <person name="Warrener P."/>
            <person name="Hickey M.J."/>
            <person name="Brinkman F.S.L."/>
            <person name="Hufnagle W.O."/>
            <person name="Kowalik D.J."/>
            <person name="Lagrou M."/>
            <person name="Garber R.L."/>
            <person name="Goltry L."/>
            <person name="Tolentino E."/>
            <person name="Westbrock-Wadman S."/>
            <person name="Yuan Y."/>
            <person name="Brody L.L."/>
            <person name="Coulter S.N."/>
            <person name="Folger K.R."/>
            <person name="Kas A."/>
            <person name="Larbig K."/>
            <person name="Lim R.M."/>
            <person name="Smith K.A."/>
            <person name="Spencer D.H."/>
            <person name="Wong G.K.-S."/>
            <person name="Wu Z."/>
            <person name="Paulsen I.T."/>
            <person name="Reizer J."/>
            <person name="Saier M.H. Jr."/>
            <person name="Hancock R.E.W."/>
            <person name="Lory S."/>
            <person name="Olson M.V."/>
        </authorList>
    </citation>
    <scope>NUCLEOTIDE SEQUENCE [LARGE SCALE GENOMIC DNA]</scope>
    <source>
        <strain>ATCC 15692 / DSM 22644 / CIP 104116 / JCM 14847 / LMG 12228 / 1C / PRS 101 / PAO1</strain>
    </source>
</reference>
<reference key="3">
    <citation type="journal article" date="1997" name="J. Bacteriol.">
        <title>Functional analysis of exsC and exsB in regulation of exoenzyme S production by Pseudomonas aeruginosa.</title>
        <authorList>
            <person name="Goranson J."/>
            <person name="Hovey A.K."/>
            <person name="Frank D.W."/>
        </authorList>
    </citation>
    <scope>FUNCTION</scope>
    <scope>DISRUPTION PHENOTYPE</scope>
</reference>
<reference key="4">
    <citation type="journal article" date="2004" name="Mol. Microbiol.">
        <title>A novel anti-anti-activator mechanism regulates expression of the Pseudomonas aeruginosa type III secretion system.</title>
        <authorList>
            <person name="Dasgupta N."/>
            <person name="Lykken G.L."/>
            <person name="Wolfgang M.C."/>
            <person name="Yahr T.L."/>
        </authorList>
    </citation>
    <scope>FUNCTION</scope>
    <scope>DISRUPTION PHENOTYPE</scope>
    <scope>INTERACTION WITH EXSD</scope>
    <scope>SUBCELLULAR LOCATION</scope>
</reference>
<reference key="5">
    <citation type="journal article" date="2006" name="J. Bacteriol.">
        <title>Characterization of ExsC and ExsD self-association and heterocomplex formation.</title>
        <authorList>
            <person name="Lykken G.L."/>
            <person name="Chen G."/>
            <person name="Brutinel E.D."/>
            <person name="Chen L."/>
            <person name="Yahr T.L."/>
        </authorList>
    </citation>
    <scope>FUNCTION</scope>
    <scope>INTERACTION WITH EXSD</scope>
</reference>
<reference key="6">
    <citation type="journal article" date="2006" name="Infect. Immun.">
        <title>Transcriptional induction of the Pseudomonas aeruginosa type III secretion system by low Ca2+ and host cell contact proceeds through two distinct signaling pathways.</title>
        <authorList>
            <person name="Dasgupta N."/>
            <person name="Ashare A."/>
            <person name="Hunninghake G.W."/>
            <person name="Yahr T.L."/>
        </authorList>
    </citation>
    <scope>FUNCTION</scope>
    <scope>DISRUPTION PHENOTYPE</scope>
</reference>
<reference key="7">
    <citation type="journal article" date="2007" name="J. Biol. Chem.">
        <title>Biochemical characterization of a regulatory cascade controlling transcription of the Pseudomonas aeruginosa type III secretion system.</title>
        <authorList>
            <person name="Zheng Z."/>
            <person name="Chen G."/>
            <person name="Joshi S."/>
            <person name="Brutinel E.D."/>
            <person name="Yahr T.L."/>
            <person name="Chen L."/>
        </authorList>
    </citation>
    <scope>SUBUNIT</scope>
    <scope>INTERACTION WITH EXSE AND EXSD</scope>
    <scope>ACTIVITY REGULATION</scope>
</reference>
<reference key="8">
    <citation type="journal article" date="2010" name="Biochemistry">
        <title>Analysis of the crystal structure of the ExsC.ExsE complex reveals distinctive binding interactions of the Pseudomonas aeruginosa type III secretion chaperone ExsC with ExsE and ExsD.</title>
        <authorList>
            <person name="Vogelaar N.J."/>
            <person name="Jing X."/>
            <person name="Robinson H.H."/>
            <person name="Schubot F.D."/>
        </authorList>
    </citation>
    <scope>X-RAY CRYSTALLOGRAPHY (2.80 ANGSTROMS) OF 1-131</scope>
    <scope>INTERACTION WITH EXSE</scope>
</reference>
<sequence length="145" mass="16229">MDLTSKVNRLLAEFAGRIGLPSLSLDEEGMASLLFDEQVGVTLLLLAERERLLLEADVAGIDVLGEGIFRQLASFNRHWHRFDLHFGFDELTGKVQLYAQILAAQLTLECFEATLANLLDHAEFWQRLLPCDSDREAVAAVGMRV</sequence>
<proteinExistence type="evidence at protein level"/>
<evidence type="ECO:0000269" key="1">
    <source>
    </source>
</evidence>
<evidence type="ECO:0000269" key="2">
    <source>
    </source>
</evidence>
<evidence type="ECO:0000269" key="3">
    <source>
    </source>
</evidence>
<evidence type="ECO:0000269" key="4">
    <source>
    </source>
</evidence>
<evidence type="ECO:0000269" key="5">
    <source>
    </source>
</evidence>
<evidence type="ECO:0000269" key="6">
    <source>
    </source>
</evidence>
<evidence type="ECO:0007829" key="7">
    <source>
        <dbReference type="PDB" id="3KXY"/>
    </source>
</evidence>
<organism>
    <name type="scientific">Pseudomonas aeruginosa (strain ATCC 15692 / DSM 22644 / CIP 104116 / JCM 14847 / LMG 12228 / 1C / PRS 101 / PAO1)</name>
    <dbReference type="NCBI Taxonomy" id="208964"/>
    <lineage>
        <taxon>Bacteria</taxon>
        <taxon>Pseudomonadati</taxon>
        <taxon>Pseudomonadota</taxon>
        <taxon>Gammaproteobacteria</taxon>
        <taxon>Pseudomonadales</taxon>
        <taxon>Pseudomonadaceae</taxon>
        <taxon>Pseudomonas</taxon>
    </lineage>
</organism>
<feature type="chain" id="PRO_0000021219" description="Transcriptional anti-antiactivator ExsC">
    <location>
        <begin position="1"/>
        <end position="145"/>
    </location>
</feature>
<feature type="helix" evidence="7">
    <location>
        <begin position="3"/>
        <end position="18"/>
    </location>
</feature>
<feature type="strand" evidence="7">
    <location>
        <begin position="29"/>
        <end position="35"/>
    </location>
</feature>
<feature type="turn" evidence="7">
    <location>
        <begin position="36"/>
        <end position="38"/>
    </location>
</feature>
<feature type="strand" evidence="7">
    <location>
        <begin position="39"/>
        <end position="46"/>
    </location>
</feature>
<feature type="turn" evidence="7">
    <location>
        <begin position="47"/>
        <end position="50"/>
    </location>
</feature>
<feature type="strand" evidence="7">
    <location>
        <begin position="51"/>
        <end position="60"/>
    </location>
</feature>
<feature type="helix" evidence="7">
    <location>
        <begin position="61"/>
        <end position="63"/>
    </location>
</feature>
<feature type="helix" evidence="7">
    <location>
        <begin position="68"/>
        <end position="77"/>
    </location>
</feature>
<feature type="helix" evidence="7">
    <location>
        <begin position="78"/>
        <end position="81"/>
    </location>
</feature>
<feature type="strand" evidence="7">
    <location>
        <begin position="85"/>
        <end position="88"/>
    </location>
</feature>
<feature type="turn" evidence="7">
    <location>
        <begin position="90"/>
        <end position="92"/>
    </location>
</feature>
<feature type="strand" evidence="7">
    <location>
        <begin position="94"/>
        <end position="102"/>
    </location>
</feature>
<feature type="turn" evidence="7">
    <location>
        <begin position="103"/>
        <end position="105"/>
    </location>
</feature>
<feature type="helix" evidence="7">
    <location>
        <begin position="108"/>
        <end position="128"/>
    </location>
</feature>